<sequence>MINILILDTDIGIRNSLKLYLTEIGFHVEESTCVDQAWDILKRKKIDLIICDIIMPGMGGFNFLHQLRLNTDYCTLPVILLTTRGLTQDRIIGYKTGCDSYISKPFNIEELVVIIEGVLNRHTLIRLKLEKKQKNSFLLIKSNNLKINFTPREQSVLNLVVEGLLNKQIAANLNISIRIVEKYVSRLFIKTKTRNRAELVKYALENNLIT</sequence>
<accession>P48359</accession>
<evidence type="ECO:0000255" key="1">
    <source>
        <dbReference type="PROSITE-ProRule" id="PRU00169"/>
    </source>
</evidence>
<evidence type="ECO:0000255" key="2">
    <source>
        <dbReference type="PROSITE-ProRule" id="PRU00411"/>
    </source>
</evidence>
<keyword id="KW-0194">Cyanelle</keyword>
<keyword id="KW-0238">DNA-binding</keyword>
<keyword id="KW-0597">Phosphoprotein</keyword>
<keyword id="KW-0934">Plastid</keyword>
<keyword id="KW-0804">Transcription</keyword>
<keyword id="KW-0805">Transcription regulation</keyword>
<keyword id="KW-0902">Two-component regulatory system</keyword>
<comment type="subcellular location">
    <subcellularLocation>
        <location>Plastid</location>
        <location>Cyanelle</location>
    </subcellularLocation>
</comment>
<proteinExistence type="inferred from homology"/>
<name>YCF29_CYAPA</name>
<feature type="chain" id="PRO_0000081354" description="Probable transcriptional regulator ycf29">
    <location>
        <begin position="1"/>
        <end position="210"/>
    </location>
</feature>
<feature type="domain" description="Response regulatory" evidence="1">
    <location>
        <begin position="3"/>
        <end position="119"/>
    </location>
</feature>
<feature type="domain" description="HTH luxR-type" evidence="2">
    <location>
        <begin position="142"/>
        <end position="207"/>
    </location>
</feature>
<feature type="modified residue" description="4-aspartylphosphate" evidence="1">
    <location>
        <position position="52"/>
    </location>
</feature>
<reference key="1">
    <citation type="journal article" date="1995" name="Plant Mol. Biol. Rep.">
        <title>Nucleotide sequence of the cyanelle DNA from Cyanophora paradoxa.</title>
        <authorList>
            <person name="Stirewalt V.L."/>
            <person name="Michalowski C.B."/>
            <person name="Loeffelhardt W."/>
            <person name="Bohnert H.J."/>
            <person name="Bryant D.A."/>
        </authorList>
    </citation>
    <scope>NUCLEOTIDE SEQUENCE [LARGE SCALE GENOMIC DNA]</scope>
    <source>
        <strain>UTEX LB 555 / Pringsheim</strain>
    </source>
</reference>
<reference key="2">
    <citation type="book" date="1997" name="Eukaryotism and symbiosis">
        <title>The complete sequence of the cyanelle genome of Cyanophora paradoxa: the genetic complexity of a primitive plastid.</title>
        <editorList>
            <person name="Schenk H.E.A."/>
            <person name="Herrmann R."/>
            <person name="Jeon K.W."/>
            <person name="Mueller N.E."/>
            <person name="Schwemmler W."/>
        </editorList>
        <authorList>
            <person name="Loeffelhardt W."/>
            <person name="Stirewalt V.L."/>
            <person name="Michalowski C.B."/>
            <person name="Annarella M."/>
            <person name="Farley J.Y."/>
            <person name="Schluchter W.M."/>
            <person name="Chung S."/>
            <person name="Newmann-Spallart C."/>
            <person name="Steiner J.M."/>
            <person name="Jakowitsch J."/>
            <person name="Bohnert H.J."/>
            <person name="Bryant D.A."/>
        </authorList>
    </citation>
    <scope>NUCLEOTIDE SEQUENCE [LARGE SCALE GENOMIC DNA]</scope>
    <source>
        <strain>UTEX LB 555 / Pringsheim</strain>
    </source>
</reference>
<gene>
    <name type="primary">ycf29</name>
</gene>
<protein>
    <recommendedName>
        <fullName>Probable transcriptional regulator ycf29</fullName>
    </recommendedName>
</protein>
<geneLocation type="cyanelle"/>
<dbReference type="EMBL" id="U30821">
    <property type="protein sequence ID" value="AAA81207.1"/>
    <property type="molecule type" value="Genomic_DNA"/>
</dbReference>
<dbReference type="PIR" id="T06864">
    <property type="entry name" value="T06864"/>
</dbReference>
<dbReference type="RefSeq" id="NP_043176.1">
    <property type="nucleotide sequence ID" value="NC_001675.1"/>
</dbReference>
<dbReference type="SMR" id="P48359"/>
<dbReference type="GeneID" id="801570"/>
<dbReference type="GO" id="GO:0009842">
    <property type="term" value="C:cyanelle"/>
    <property type="evidence" value="ECO:0007669"/>
    <property type="project" value="UniProtKB-SubCell"/>
</dbReference>
<dbReference type="GO" id="GO:0005829">
    <property type="term" value="C:cytosol"/>
    <property type="evidence" value="ECO:0007669"/>
    <property type="project" value="TreeGrafter"/>
</dbReference>
<dbReference type="GO" id="GO:0032993">
    <property type="term" value="C:protein-DNA complex"/>
    <property type="evidence" value="ECO:0007669"/>
    <property type="project" value="TreeGrafter"/>
</dbReference>
<dbReference type="GO" id="GO:0000156">
    <property type="term" value="F:phosphorelay response regulator activity"/>
    <property type="evidence" value="ECO:0007669"/>
    <property type="project" value="TreeGrafter"/>
</dbReference>
<dbReference type="GO" id="GO:0000976">
    <property type="term" value="F:transcription cis-regulatory region binding"/>
    <property type="evidence" value="ECO:0007669"/>
    <property type="project" value="TreeGrafter"/>
</dbReference>
<dbReference type="GO" id="GO:0006355">
    <property type="term" value="P:regulation of DNA-templated transcription"/>
    <property type="evidence" value="ECO:0007669"/>
    <property type="project" value="InterPro"/>
</dbReference>
<dbReference type="CDD" id="cd06170">
    <property type="entry name" value="LuxR_C_like"/>
    <property type="match status" value="1"/>
</dbReference>
<dbReference type="CDD" id="cd19927">
    <property type="entry name" value="REC_Ycf29"/>
    <property type="match status" value="1"/>
</dbReference>
<dbReference type="Gene3D" id="3.40.50.2300">
    <property type="match status" value="1"/>
</dbReference>
<dbReference type="Gene3D" id="1.10.10.10">
    <property type="entry name" value="Winged helix-like DNA-binding domain superfamily/Winged helix DNA-binding domain"/>
    <property type="match status" value="1"/>
</dbReference>
<dbReference type="InterPro" id="IPR011006">
    <property type="entry name" value="CheY-like_superfamily"/>
</dbReference>
<dbReference type="InterPro" id="IPR016032">
    <property type="entry name" value="Sig_transdc_resp-reg_C-effctor"/>
</dbReference>
<dbReference type="InterPro" id="IPR001789">
    <property type="entry name" value="Sig_transdc_resp-reg_receiver"/>
</dbReference>
<dbReference type="InterPro" id="IPR000792">
    <property type="entry name" value="Tscrpt_reg_LuxR_C"/>
</dbReference>
<dbReference type="InterPro" id="IPR039420">
    <property type="entry name" value="WalR-like"/>
</dbReference>
<dbReference type="InterPro" id="IPR036388">
    <property type="entry name" value="WH-like_DNA-bd_sf"/>
</dbReference>
<dbReference type="PANTHER" id="PTHR48111">
    <property type="entry name" value="REGULATOR OF RPOS"/>
    <property type="match status" value="1"/>
</dbReference>
<dbReference type="PANTHER" id="PTHR48111:SF67">
    <property type="entry name" value="TRANSCRIPTIONAL REGULATORY PROTEIN TCTD"/>
    <property type="match status" value="1"/>
</dbReference>
<dbReference type="Pfam" id="PF00196">
    <property type="entry name" value="GerE"/>
    <property type="match status" value="1"/>
</dbReference>
<dbReference type="Pfam" id="PF00072">
    <property type="entry name" value="Response_reg"/>
    <property type="match status" value="1"/>
</dbReference>
<dbReference type="PRINTS" id="PR00038">
    <property type="entry name" value="HTHLUXR"/>
</dbReference>
<dbReference type="SMART" id="SM00421">
    <property type="entry name" value="HTH_LUXR"/>
    <property type="match status" value="1"/>
</dbReference>
<dbReference type="SMART" id="SM00448">
    <property type="entry name" value="REC"/>
    <property type="match status" value="1"/>
</dbReference>
<dbReference type="SUPFAM" id="SSF46894">
    <property type="entry name" value="C-terminal effector domain of the bipartite response regulators"/>
    <property type="match status" value="1"/>
</dbReference>
<dbReference type="SUPFAM" id="SSF52172">
    <property type="entry name" value="CheY-like"/>
    <property type="match status" value="1"/>
</dbReference>
<dbReference type="PROSITE" id="PS50043">
    <property type="entry name" value="HTH_LUXR_2"/>
    <property type="match status" value="1"/>
</dbReference>
<dbReference type="PROSITE" id="PS50110">
    <property type="entry name" value="RESPONSE_REGULATORY"/>
    <property type="match status" value="1"/>
</dbReference>
<organism>
    <name type="scientific">Cyanophora paradoxa</name>
    <dbReference type="NCBI Taxonomy" id="2762"/>
    <lineage>
        <taxon>Eukaryota</taxon>
        <taxon>Glaucocystophyceae</taxon>
        <taxon>Cyanophoraceae</taxon>
        <taxon>Cyanophora</taxon>
    </lineage>
</organism>